<reference key="1">
    <citation type="journal article" date="1999" name="Genomics">
        <title>Isolation, characterization, and mapping of the mouse and human Fgd2 genes, faciogenital dysplasia (FGD1; Aarskog syndrome) gene homologues.</title>
        <authorList>
            <person name="Pasteris N.G."/>
            <person name="Gorski J.L."/>
        </authorList>
    </citation>
    <scope>NUCLEOTIDE SEQUENCE [MRNA]</scope>
    <scope>TISSUE SPECIFICITY</scope>
    <source>
        <tissue>Spleen</tissue>
    </source>
</reference>
<reference key="2">
    <citation type="journal article" date="2008" name="J. Biol. Chem.">
        <title>FGD2, a CDC42-specific exchange factor expressed by antigen-presenting cells, localizes to early endosomes and active membrane ruffles.</title>
        <authorList>
            <person name="Huber C."/>
            <person name="Martensson A."/>
            <person name="Bokoch G.M."/>
            <person name="Nemazee D."/>
            <person name="Gavin A.L."/>
        </authorList>
    </citation>
    <scope>NUCLEOTIDE SEQUENCE [MRNA]</scope>
    <scope>FUNCTION</scope>
    <scope>SUBCELLULAR LOCATION</scope>
    <scope>TISSUE SPECIFICITY</scope>
    <scope>MUTAGENESIS OF SER-287; ASN-288; GLN-454 AND TRP-455</scope>
    <scope>DOMAIN DH; PH AND FYVE-TYPE ZINC-FINGER</scope>
    <source>
        <strain>C57BL/10 X DBA/2</strain>
        <tissue>Spleen</tissue>
    </source>
</reference>
<reference key="3">
    <citation type="journal article" date="2005" name="Science">
        <title>The transcriptional landscape of the mammalian genome.</title>
        <authorList>
            <person name="Carninci P."/>
            <person name="Kasukawa T."/>
            <person name="Katayama S."/>
            <person name="Gough J."/>
            <person name="Frith M.C."/>
            <person name="Maeda N."/>
            <person name="Oyama R."/>
            <person name="Ravasi T."/>
            <person name="Lenhard B."/>
            <person name="Wells C."/>
            <person name="Kodzius R."/>
            <person name="Shimokawa K."/>
            <person name="Bajic V.B."/>
            <person name="Brenner S.E."/>
            <person name="Batalov S."/>
            <person name="Forrest A.R."/>
            <person name="Zavolan M."/>
            <person name="Davis M.J."/>
            <person name="Wilming L.G."/>
            <person name="Aidinis V."/>
            <person name="Allen J.E."/>
            <person name="Ambesi-Impiombato A."/>
            <person name="Apweiler R."/>
            <person name="Aturaliya R.N."/>
            <person name="Bailey T.L."/>
            <person name="Bansal M."/>
            <person name="Baxter L."/>
            <person name="Beisel K.W."/>
            <person name="Bersano T."/>
            <person name="Bono H."/>
            <person name="Chalk A.M."/>
            <person name="Chiu K.P."/>
            <person name="Choudhary V."/>
            <person name="Christoffels A."/>
            <person name="Clutterbuck D.R."/>
            <person name="Crowe M.L."/>
            <person name="Dalla E."/>
            <person name="Dalrymple B.P."/>
            <person name="de Bono B."/>
            <person name="Della Gatta G."/>
            <person name="di Bernardo D."/>
            <person name="Down T."/>
            <person name="Engstrom P."/>
            <person name="Fagiolini M."/>
            <person name="Faulkner G."/>
            <person name="Fletcher C.F."/>
            <person name="Fukushima T."/>
            <person name="Furuno M."/>
            <person name="Futaki S."/>
            <person name="Gariboldi M."/>
            <person name="Georgii-Hemming P."/>
            <person name="Gingeras T.R."/>
            <person name="Gojobori T."/>
            <person name="Green R.E."/>
            <person name="Gustincich S."/>
            <person name="Harbers M."/>
            <person name="Hayashi Y."/>
            <person name="Hensch T.K."/>
            <person name="Hirokawa N."/>
            <person name="Hill D."/>
            <person name="Huminiecki L."/>
            <person name="Iacono M."/>
            <person name="Ikeo K."/>
            <person name="Iwama A."/>
            <person name="Ishikawa T."/>
            <person name="Jakt M."/>
            <person name="Kanapin A."/>
            <person name="Katoh M."/>
            <person name="Kawasawa Y."/>
            <person name="Kelso J."/>
            <person name="Kitamura H."/>
            <person name="Kitano H."/>
            <person name="Kollias G."/>
            <person name="Krishnan S.P."/>
            <person name="Kruger A."/>
            <person name="Kummerfeld S.K."/>
            <person name="Kurochkin I.V."/>
            <person name="Lareau L.F."/>
            <person name="Lazarevic D."/>
            <person name="Lipovich L."/>
            <person name="Liu J."/>
            <person name="Liuni S."/>
            <person name="McWilliam S."/>
            <person name="Madan Babu M."/>
            <person name="Madera M."/>
            <person name="Marchionni L."/>
            <person name="Matsuda H."/>
            <person name="Matsuzawa S."/>
            <person name="Miki H."/>
            <person name="Mignone F."/>
            <person name="Miyake S."/>
            <person name="Morris K."/>
            <person name="Mottagui-Tabar S."/>
            <person name="Mulder N."/>
            <person name="Nakano N."/>
            <person name="Nakauchi H."/>
            <person name="Ng P."/>
            <person name="Nilsson R."/>
            <person name="Nishiguchi S."/>
            <person name="Nishikawa S."/>
            <person name="Nori F."/>
            <person name="Ohara O."/>
            <person name="Okazaki Y."/>
            <person name="Orlando V."/>
            <person name="Pang K.C."/>
            <person name="Pavan W.J."/>
            <person name="Pavesi G."/>
            <person name="Pesole G."/>
            <person name="Petrovsky N."/>
            <person name="Piazza S."/>
            <person name="Reed J."/>
            <person name="Reid J.F."/>
            <person name="Ring B.Z."/>
            <person name="Ringwald M."/>
            <person name="Rost B."/>
            <person name="Ruan Y."/>
            <person name="Salzberg S.L."/>
            <person name="Sandelin A."/>
            <person name="Schneider C."/>
            <person name="Schoenbach C."/>
            <person name="Sekiguchi K."/>
            <person name="Semple C.A."/>
            <person name="Seno S."/>
            <person name="Sessa L."/>
            <person name="Sheng Y."/>
            <person name="Shibata Y."/>
            <person name="Shimada H."/>
            <person name="Shimada K."/>
            <person name="Silva D."/>
            <person name="Sinclair B."/>
            <person name="Sperling S."/>
            <person name="Stupka E."/>
            <person name="Sugiura K."/>
            <person name="Sultana R."/>
            <person name="Takenaka Y."/>
            <person name="Taki K."/>
            <person name="Tammoja K."/>
            <person name="Tan S.L."/>
            <person name="Tang S."/>
            <person name="Taylor M.S."/>
            <person name="Tegner J."/>
            <person name="Teichmann S.A."/>
            <person name="Ueda H.R."/>
            <person name="van Nimwegen E."/>
            <person name="Verardo R."/>
            <person name="Wei C.L."/>
            <person name="Yagi K."/>
            <person name="Yamanishi H."/>
            <person name="Zabarovsky E."/>
            <person name="Zhu S."/>
            <person name="Zimmer A."/>
            <person name="Hide W."/>
            <person name="Bult C."/>
            <person name="Grimmond S.M."/>
            <person name="Teasdale R.D."/>
            <person name="Liu E.T."/>
            <person name="Brusic V."/>
            <person name="Quackenbush J."/>
            <person name="Wahlestedt C."/>
            <person name="Mattick J.S."/>
            <person name="Hume D.A."/>
            <person name="Kai C."/>
            <person name="Sasaki D."/>
            <person name="Tomaru Y."/>
            <person name="Fukuda S."/>
            <person name="Kanamori-Katayama M."/>
            <person name="Suzuki M."/>
            <person name="Aoki J."/>
            <person name="Arakawa T."/>
            <person name="Iida J."/>
            <person name="Imamura K."/>
            <person name="Itoh M."/>
            <person name="Kato T."/>
            <person name="Kawaji H."/>
            <person name="Kawagashira N."/>
            <person name="Kawashima T."/>
            <person name="Kojima M."/>
            <person name="Kondo S."/>
            <person name="Konno H."/>
            <person name="Nakano K."/>
            <person name="Ninomiya N."/>
            <person name="Nishio T."/>
            <person name="Okada M."/>
            <person name="Plessy C."/>
            <person name="Shibata K."/>
            <person name="Shiraki T."/>
            <person name="Suzuki S."/>
            <person name="Tagami M."/>
            <person name="Waki K."/>
            <person name="Watahiki A."/>
            <person name="Okamura-Oho Y."/>
            <person name="Suzuki H."/>
            <person name="Kawai J."/>
            <person name="Hayashizaki Y."/>
        </authorList>
    </citation>
    <scope>NUCLEOTIDE SEQUENCE [LARGE SCALE MRNA]</scope>
    <source>
        <strain>C57BL/6J</strain>
        <strain>NOD</strain>
        <tissue>Spleen</tissue>
        <tissue>Thymus</tissue>
    </source>
</reference>
<reference key="4">
    <citation type="submission" date="2003-05" db="EMBL/GenBank/DDBJ databases">
        <title>Genomic sequence analysis in the mouse T-complex region.</title>
        <authorList>
            <person name="Brathwaite M.E."/>
            <person name="Waeltz P."/>
            <person name="Qian Y."/>
            <person name="Dudekula D."/>
            <person name="Schlessinger D."/>
            <person name="Nagaraja R."/>
        </authorList>
    </citation>
    <scope>NUCLEOTIDE SEQUENCE [LARGE SCALE GENOMIC DNA]</scope>
    <source>
        <strain>C57BL/6J</strain>
    </source>
</reference>
<reference key="5">
    <citation type="journal article" date="2004" name="Genome Res.">
        <title>The status, quality, and expansion of the NIH full-length cDNA project: the Mammalian Gene Collection (MGC).</title>
        <authorList>
            <consortium name="The MGC Project Team"/>
        </authorList>
    </citation>
    <scope>NUCLEOTIDE SEQUENCE [LARGE SCALE MRNA] OF 195-655</scope>
    <source>
        <strain>Czech II</strain>
        <tissue>Mammary gland</tissue>
    </source>
</reference>
<reference key="6">
    <citation type="journal article" date="2010" name="Cell">
        <title>A tissue-specific atlas of mouse protein phosphorylation and expression.</title>
        <authorList>
            <person name="Huttlin E.L."/>
            <person name="Jedrychowski M.P."/>
            <person name="Elias J.E."/>
            <person name="Goswami T."/>
            <person name="Rad R."/>
            <person name="Beausoleil S.A."/>
            <person name="Villen J."/>
            <person name="Haas W."/>
            <person name="Sowa M.E."/>
            <person name="Gygi S.P."/>
        </authorList>
    </citation>
    <scope>PHOSPHORYLATION [LARGE SCALE ANALYSIS] AT SER-10; SER-39; SER-47; THR-644 AND SER-654</scope>
    <scope>IDENTIFICATION BY MASS SPECTROMETRY [LARGE SCALE ANALYSIS]</scope>
    <source>
        <tissue>Spleen</tissue>
    </source>
</reference>
<gene>
    <name type="primary">Fgd2</name>
</gene>
<name>FGD2_MOUSE</name>
<sequence length="655" mass="74634">MERACEKQDSVCNLVAVFENNRTPGEAPGSHSLEDQPHSPEHQLSLSPEPWEAPPVKEALKSEFRPVSRTYLSSLKNKLSSGAWRRSCQPGVSPGPETQEPEEKRVVRELLETEQAYVARLHLLDQVFFQELLREAGRSKAFPEDVVKLIFSNISSIYRFHAQFFLPELQRRVDDWAATPRIGDVIQKLAPFLKMYSEYVKNFERAAELLATWMDKSQPFQEVVTRIQCSEASSSLTLQHHMLEPVQRIPRYELLLKEYVQKLPAQAPDLEDAQRALDMIFSAAQHSNAAIAEMERLQGLWDVYQRLGLEDDIVDPSNTLLREGPVLKISFRRSDPMERYLVLFNNMLLYCVPRVLQVGAQFQVRTRIDVAGMKVRELTDAEFPHSFLVSGKQRTLELQARSRDEMVSWMQACQAAIDQVEKRSETFKAAVQGPQGDTQEPKPQVEELGLRAPQWVRDKMVTMCMRCQEPFNALTRRRHHCRACGYVVCAKCSDYRAELKYDSNRPNRVCLTCYTFLTGNVLPQGKEDKRRGILEKEASAAPEQSLVCSFLQLIGDKCSRSLPRSWCVIPRDDPLVLYVYAAPQDTKAHTSIPLLGYQVISGPQGDPRVFQLQQSGQQYTFKAESVELQGRWVTAIKRAASGRTPEGPDEEDVSD</sequence>
<comment type="function">
    <text evidence="6">Activates CDC42, a member of the Ras-like family of Rho- and Rac proteins, by exchanging bound GDP for free GTP. Activates JNK1 via CDC42 but not RAC1. Binds to phosphatidylinositol 4,5-bisphosphate, phosphatidylinositol 3,4,5-trisphosphate, phosphatidylinositol 5-monophosphate, phosphatidylinositol 4-monophosphate and phosphatidylinositol 3-monophosphate.</text>
</comment>
<comment type="subcellular location">
    <subcellularLocation>
        <location evidence="6">Cytoplasm</location>
    </subcellularLocation>
    <subcellularLocation>
        <location evidence="6">Nucleus</location>
    </subcellularLocation>
    <subcellularLocation>
        <location evidence="6">Early endosome</location>
    </subcellularLocation>
    <subcellularLocation>
        <location evidence="6">Early endosome membrane</location>
    </subcellularLocation>
    <subcellularLocation>
        <location evidence="6">Cell projection</location>
        <location evidence="6">Ruffle membrane</location>
    </subcellularLocation>
    <subcellularLocation>
        <location evidence="8">Cytoplasm</location>
        <location evidence="8">Cytoskeleton</location>
    </subcellularLocation>
    <text>Recruitment to the endosome and ruffle membrane requires the presence of phosphoinositides.</text>
</comment>
<comment type="tissue specificity">
    <text evidence="5 6">Lymph node, spleen, B-lymphocytes and macrophages (at protein level). Expressed at high levels in lymph node, spleen, B-lymphocytes and bone marrow macrophages. Expressed at lower levels in mature bone marrow dendritic cells. In both immature and mature B-cells, expression is down-regulated by prior B-cell receptor signaling. Expression remains high in resting B and memory cells but declines upon differentiation into plasma cells.</text>
</comment>
<comment type="domain">
    <text evidence="6">The FYVE-type zinc-finger is necessary for early endosome localization. Recruitment to endosomal membranes via this domain requires the presence of phosphatidylinositol 3-phosphate or other phosphatidylinositides.</text>
</comment>
<comment type="domain">
    <text evidence="6">The PH domain is necessary for localization to the ruffle membrane. Recruitment to ruffle membrane occurs through binding of phosphoinositides by the PH domain. This domain also contributes to the lipid-binding properties of the protein.</text>
</comment>
<comment type="domain">
    <text evidence="6">The DH domain is necessary for its ability to activate JNK1 via CDC42.</text>
</comment>
<comment type="sequence caution" evidence="7">
    <conflict type="frameshift">
        <sequence resource="EMBL-CDS" id="AAC35430"/>
    </conflict>
</comment>
<comment type="sequence caution" evidence="7">
    <conflict type="miscellaneous discrepancy">
        <sequence resource="EMBL-CDS" id="AAH21845"/>
    </conflict>
    <text>Intron retention.</text>
</comment>
<comment type="sequence caution" evidence="7">
    <conflict type="erroneous gene model prediction">
        <sequence resource="EMBL-CDS" id="AAP45200"/>
    </conflict>
</comment>
<feature type="chain" id="PRO_0000080943" description="FYVE, RhoGEF and PH domain-containing protein 2">
    <location>
        <begin position="1"/>
        <end position="655"/>
    </location>
</feature>
<feature type="domain" description="DH" evidence="1">
    <location>
        <begin position="102"/>
        <end position="290"/>
    </location>
</feature>
<feature type="domain" description="PH 1" evidence="3">
    <location>
        <begin position="319"/>
        <end position="418"/>
    </location>
</feature>
<feature type="domain" description="PH 2" evidence="3">
    <location>
        <begin position="544"/>
        <end position="641"/>
    </location>
</feature>
<feature type="zinc finger region" description="FYVE-type" evidence="2">
    <location>
        <begin position="458"/>
        <end position="518"/>
    </location>
</feature>
<feature type="region of interest" description="Disordered" evidence="4">
    <location>
        <begin position="21"/>
        <end position="52"/>
    </location>
</feature>
<feature type="region of interest" description="Disordered" evidence="4">
    <location>
        <begin position="84"/>
        <end position="103"/>
    </location>
</feature>
<feature type="compositionally biased region" description="Basic and acidic residues" evidence="4">
    <location>
        <begin position="32"/>
        <end position="41"/>
    </location>
</feature>
<feature type="binding site" evidence="2">
    <location>
        <position position="464"/>
    </location>
    <ligand>
        <name>Zn(2+)</name>
        <dbReference type="ChEBI" id="CHEBI:29105"/>
        <label>1</label>
    </ligand>
</feature>
<feature type="binding site" evidence="2">
    <location>
        <position position="467"/>
    </location>
    <ligand>
        <name>Zn(2+)</name>
        <dbReference type="ChEBI" id="CHEBI:29105"/>
        <label>1</label>
    </ligand>
</feature>
<feature type="binding site" evidence="2">
    <location>
        <position position="481"/>
    </location>
    <ligand>
        <name>Zn(2+)</name>
        <dbReference type="ChEBI" id="CHEBI:29105"/>
        <label>2</label>
    </ligand>
</feature>
<feature type="binding site" evidence="2">
    <location>
        <position position="484"/>
    </location>
    <ligand>
        <name>Zn(2+)</name>
        <dbReference type="ChEBI" id="CHEBI:29105"/>
        <label>2</label>
    </ligand>
</feature>
<feature type="binding site" evidence="2">
    <location>
        <position position="489"/>
    </location>
    <ligand>
        <name>Zn(2+)</name>
        <dbReference type="ChEBI" id="CHEBI:29105"/>
        <label>1</label>
    </ligand>
</feature>
<feature type="binding site" evidence="2">
    <location>
        <position position="492"/>
    </location>
    <ligand>
        <name>Zn(2+)</name>
        <dbReference type="ChEBI" id="CHEBI:29105"/>
        <label>1</label>
    </ligand>
</feature>
<feature type="binding site" evidence="2">
    <location>
        <position position="510"/>
    </location>
    <ligand>
        <name>Zn(2+)</name>
        <dbReference type="ChEBI" id="CHEBI:29105"/>
        <label>2</label>
    </ligand>
</feature>
<feature type="binding site" evidence="2">
    <location>
        <position position="513"/>
    </location>
    <ligand>
        <name>Zn(2+)</name>
        <dbReference type="ChEBI" id="CHEBI:29105"/>
        <label>2</label>
    </ligand>
</feature>
<feature type="modified residue" description="Phosphoserine" evidence="9">
    <location>
        <position position="10"/>
    </location>
</feature>
<feature type="modified residue" description="Phosphoserine" evidence="9">
    <location>
        <position position="39"/>
    </location>
</feature>
<feature type="modified residue" description="Phosphoserine" evidence="9">
    <location>
        <position position="47"/>
    </location>
</feature>
<feature type="modified residue" description="Phosphothreonine" evidence="9">
    <location>
        <position position="644"/>
    </location>
</feature>
<feature type="modified residue" description="Phosphoserine" evidence="9">
    <location>
        <position position="654"/>
    </location>
</feature>
<feature type="mutagenesis site" description="No effect on early endosome localization and reduced JNK1 activation; when associated with A-288." evidence="6">
    <original>S</original>
    <variation>A</variation>
    <location>
        <position position="287"/>
    </location>
</feature>
<feature type="mutagenesis site" description="No effect on early endosome localization and reduced JNK1 activation; when associated with A-287." evidence="6">
    <original>N</original>
    <variation>A</variation>
    <location>
        <position position="288"/>
    </location>
</feature>
<feature type="mutagenesis site" description="Loss of early endosome localization; when associated with T-455." evidence="6">
    <original>Q</original>
    <variation>K</variation>
    <location>
        <position position="454"/>
    </location>
</feature>
<feature type="mutagenesis site" description="Loss of early endosome localization; when associated with K-454." evidence="6">
    <original>W</original>
    <variation>T</variation>
    <location>
        <position position="455"/>
    </location>
</feature>
<feature type="sequence conflict" description="In Ref. 1; ABC70180 and 2; AAC35430." evidence="7" ref="1 2">
    <original>S</original>
    <variation>I</variation>
    <location>
        <position position="39"/>
    </location>
</feature>
<feature type="sequence conflict" description="In Ref. 1; ABC70180." evidence="7" ref="1">
    <original>E</original>
    <variation>D</variation>
    <location>
        <position position="543"/>
    </location>
</feature>
<feature type="sequence conflict" description="In Ref. 3; BAE33605." evidence="7" ref="3">
    <original>RS</original>
    <variation>ST</variation>
    <location>
        <begin position="560"/>
        <end position="561"/>
    </location>
</feature>
<evidence type="ECO:0000255" key="1">
    <source>
        <dbReference type="PROSITE-ProRule" id="PRU00062"/>
    </source>
</evidence>
<evidence type="ECO:0000255" key="2">
    <source>
        <dbReference type="PROSITE-ProRule" id="PRU00091"/>
    </source>
</evidence>
<evidence type="ECO:0000255" key="3">
    <source>
        <dbReference type="PROSITE-ProRule" id="PRU00145"/>
    </source>
</evidence>
<evidence type="ECO:0000256" key="4">
    <source>
        <dbReference type="SAM" id="MobiDB-lite"/>
    </source>
</evidence>
<evidence type="ECO:0000269" key="5">
    <source>
    </source>
</evidence>
<evidence type="ECO:0000269" key="6">
    <source ref="2"/>
</evidence>
<evidence type="ECO:0000305" key="7"/>
<evidence type="ECO:0000305" key="8">
    <source ref="2"/>
</evidence>
<evidence type="ECO:0007744" key="9">
    <source>
    </source>
</evidence>
<protein>
    <recommendedName>
        <fullName>FYVE, RhoGEF and PH domain-containing protein 2</fullName>
    </recommendedName>
</protein>
<accession>Q8BY35</accession>
<accession>O88841</accession>
<accession>Q2L9D2</accession>
<accession>Q3U195</accession>
<accession>Q7TSE3</accession>
<accession>Q8VDH4</accession>
<proteinExistence type="evidence at protein level"/>
<organism>
    <name type="scientific">Mus musculus</name>
    <name type="common">Mouse</name>
    <dbReference type="NCBI Taxonomy" id="10090"/>
    <lineage>
        <taxon>Eukaryota</taxon>
        <taxon>Metazoa</taxon>
        <taxon>Chordata</taxon>
        <taxon>Craniata</taxon>
        <taxon>Vertebrata</taxon>
        <taxon>Euteleostomi</taxon>
        <taxon>Mammalia</taxon>
        <taxon>Eutheria</taxon>
        <taxon>Euarchontoglires</taxon>
        <taxon>Glires</taxon>
        <taxon>Rodentia</taxon>
        <taxon>Myomorpha</taxon>
        <taxon>Muroidea</taxon>
        <taxon>Muridae</taxon>
        <taxon>Murinae</taxon>
        <taxon>Mus</taxon>
        <taxon>Mus</taxon>
    </lineage>
</organism>
<keyword id="KW-1003">Cell membrane</keyword>
<keyword id="KW-0966">Cell projection</keyword>
<keyword id="KW-0963">Cytoplasm</keyword>
<keyword id="KW-0206">Cytoskeleton</keyword>
<keyword id="KW-0967">Endosome</keyword>
<keyword id="KW-0344">Guanine-nucleotide releasing factor</keyword>
<keyword id="KW-0472">Membrane</keyword>
<keyword id="KW-0479">Metal-binding</keyword>
<keyword id="KW-0539">Nucleus</keyword>
<keyword id="KW-0597">Phosphoprotein</keyword>
<keyword id="KW-1185">Reference proteome</keyword>
<keyword id="KW-0677">Repeat</keyword>
<keyword id="KW-0862">Zinc</keyword>
<keyword id="KW-0863">Zinc-finger</keyword>
<dbReference type="EMBL" id="AF017368">
    <property type="protein sequence ID" value="AAC35430.1"/>
    <property type="status" value="ALT_FRAME"/>
    <property type="molecule type" value="mRNA"/>
</dbReference>
<dbReference type="EMBL" id="DQ344523">
    <property type="protein sequence ID" value="ABC70180.1"/>
    <property type="molecule type" value="mRNA"/>
</dbReference>
<dbReference type="EMBL" id="AK042260">
    <property type="protein sequence ID" value="BAC31206.1"/>
    <property type="molecule type" value="mRNA"/>
</dbReference>
<dbReference type="EMBL" id="AK156151">
    <property type="protein sequence ID" value="BAE33605.1"/>
    <property type="molecule type" value="mRNA"/>
</dbReference>
<dbReference type="EMBL" id="AY301264">
    <property type="protein sequence ID" value="AAP45199.1"/>
    <property type="molecule type" value="Genomic_DNA"/>
</dbReference>
<dbReference type="EMBL" id="AY301264">
    <property type="protein sequence ID" value="AAP45200.1"/>
    <property type="status" value="ALT_SEQ"/>
    <property type="molecule type" value="Genomic_DNA"/>
</dbReference>
<dbReference type="EMBL" id="BC021845">
    <property type="protein sequence ID" value="AAH21845.1"/>
    <property type="status" value="ALT_SEQ"/>
    <property type="molecule type" value="mRNA"/>
</dbReference>
<dbReference type="CCDS" id="CCDS37537.1"/>
<dbReference type="RefSeq" id="NP_001153010.1">
    <property type="nucleotide sequence ID" value="NM_001159538.1"/>
</dbReference>
<dbReference type="RefSeq" id="NP_038738.2">
    <property type="nucleotide sequence ID" value="NM_013710.4"/>
</dbReference>
<dbReference type="RefSeq" id="XP_006524363.1">
    <property type="nucleotide sequence ID" value="XM_006524300.3"/>
</dbReference>
<dbReference type="RefSeq" id="XP_011244775.1">
    <property type="nucleotide sequence ID" value="XM_011246473.2"/>
</dbReference>
<dbReference type="SMR" id="Q8BY35"/>
<dbReference type="BioGRID" id="204940">
    <property type="interactions" value="1"/>
</dbReference>
<dbReference type="FunCoup" id="Q8BY35">
    <property type="interactions" value="302"/>
</dbReference>
<dbReference type="STRING" id="10090.ENSMUSP00000024810"/>
<dbReference type="iPTMnet" id="Q8BY35"/>
<dbReference type="PhosphoSitePlus" id="Q8BY35"/>
<dbReference type="PaxDb" id="10090-ENSMUSP00000024810"/>
<dbReference type="PeptideAtlas" id="Q8BY35"/>
<dbReference type="ProteomicsDB" id="271563"/>
<dbReference type="Antibodypedia" id="29766">
    <property type="antibodies" value="61 antibodies from 16 providers"/>
</dbReference>
<dbReference type="DNASU" id="26382"/>
<dbReference type="Ensembl" id="ENSMUST00000024810.8">
    <property type="protein sequence ID" value="ENSMUSP00000024810.7"/>
    <property type="gene ID" value="ENSMUSG00000024013.16"/>
</dbReference>
<dbReference type="GeneID" id="26382"/>
<dbReference type="KEGG" id="mmu:26382"/>
<dbReference type="UCSC" id="uc008bsx.2">
    <property type="organism name" value="mouse"/>
</dbReference>
<dbReference type="AGR" id="MGI:1347084"/>
<dbReference type="CTD" id="221472"/>
<dbReference type="MGI" id="MGI:1347084">
    <property type="gene designation" value="Fgd2"/>
</dbReference>
<dbReference type="VEuPathDB" id="HostDB:ENSMUSG00000024013"/>
<dbReference type="eggNOG" id="KOG4424">
    <property type="taxonomic scope" value="Eukaryota"/>
</dbReference>
<dbReference type="GeneTree" id="ENSGT00940000161251"/>
<dbReference type="HOGENOM" id="CLU_011755_2_1_1"/>
<dbReference type="InParanoid" id="Q8BY35"/>
<dbReference type="OMA" id="WTEKCPP"/>
<dbReference type="OrthoDB" id="660555at2759"/>
<dbReference type="PhylomeDB" id="Q8BY35"/>
<dbReference type="TreeFam" id="TF316247"/>
<dbReference type="Reactome" id="R-MMU-193648">
    <property type="pathway name" value="NRAGE signals death through JNK"/>
</dbReference>
<dbReference type="Reactome" id="R-MMU-416482">
    <property type="pathway name" value="G alpha (12/13) signalling events"/>
</dbReference>
<dbReference type="Reactome" id="R-MMU-9013148">
    <property type="pathway name" value="CDC42 GTPase cycle"/>
</dbReference>
<dbReference type="BioGRID-ORCS" id="26382">
    <property type="hits" value="4 hits in 76 CRISPR screens"/>
</dbReference>
<dbReference type="PRO" id="PR:Q8BY35"/>
<dbReference type="Proteomes" id="UP000000589">
    <property type="component" value="Chromosome 17"/>
</dbReference>
<dbReference type="RNAct" id="Q8BY35">
    <property type="molecule type" value="protein"/>
</dbReference>
<dbReference type="Bgee" id="ENSMUSG00000024013">
    <property type="expression patterns" value="Expressed in ear vesicle and 138 other cell types or tissues"/>
</dbReference>
<dbReference type="ExpressionAtlas" id="Q8BY35">
    <property type="expression patterns" value="baseline and differential"/>
</dbReference>
<dbReference type="GO" id="GO:0005737">
    <property type="term" value="C:cytoplasm"/>
    <property type="evidence" value="ECO:0000314"/>
    <property type="project" value="MGI"/>
</dbReference>
<dbReference type="GO" id="GO:0005856">
    <property type="term" value="C:cytoskeleton"/>
    <property type="evidence" value="ECO:0007669"/>
    <property type="project" value="UniProtKB-SubCell"/>
</dbReference>
<dbReference type="GO" id="GO:0005769">
    <property type="term" value="C:early endosome"/>
    <property type="evidence" value="ECO:0000314"/>
    <property type="project" value="MGI"/>
</dbReference>
<dbReference type="GO" id="GO:0031901">
    <property type="term" value="C:early endosome membrane"/>
    <property type="evidence" value="ECO:0007669"/>
    <property type="project" value="UniProtKB-SubCell"/>
</dbReference>
<dbReference type="GO" id="GO:0005634">
    <property type="term" value="C:nucleus"/>
    <property type="evidence" value="ECO:0000314"/>
    <property type="project" value="MGI"/>
</dbReference>
<dbReference type="GO" id="GO:0001726">
    <property type="term" value="C:ruffle"/>
    <property type="evidence" value="ECO:0000314"/>
    <property type="project" value="MGI"/>
</dbReference>
<dbReference type="GO" id="GO:0032587">
    <property type="term" value="C:ruffle membrane"/>
    <property type="evidence" value="ECO:0007669"/>
    <property type="project" value="UniProtKB-SubCell"/>
</dbReference>
<dbReference type="GO" id="GO:0005085">
    <property type="term" value="F:guanyl-nucleotide exchange factor activity"/>
    <property type="evidence" value="ECO:0000314"/>
    <property type="project" value="MGI"/>
</dbReference>
<dbReference type="GO" id="GO:1901981">
    <property type="term" value="F:phosphatidylinositol phosphate binding"/>
    <property type="evidence" value="ECO:0000314"/>
    <property type="project" value="MGI"/>
</dbReference>
<dbReference type="GO" id="GO:0008270">
    <property type="term" value="F:zinc ion binding"/>
    <property type="evidence" value="ECO:0007669"/>
    <property type="project" value="UniProtKB-KW"/>
</dbReference>
<dbReference type="CDD" id="cd15741">
    <property type="entry name" value="FYVE_FGD1_2_4"/>
    <property type="match status" value="1"/>
</dbReference>
<dbReference type="CDD" id="cd13386">
    <property type="entry name" value="PH1_FGD2"/>
    <property type="match status" value="1"/>
</dbReference>
<dbReference type="CDD" id="cd13236">
    <property type="entry name" value="PH2_FGD1-4"/>
    <property type="match status" value="1"/>
</dbReference>
<dbReference type="CDD" id="cd00160">
    <property type="entry name" value="RhoGEF"/>
    <property type="match status" value="1"/>
</dbReference>
<dbReference type="FunFam" id="3.30.40.10:FF:000061">
    <property type="entry name" value="FYVE, RhoGEF and PH domain containing 1"/>
    <property type="match status" value="1"/>
</dbReference>
<dbReference type="FunFam" id="1.20.900.10:FF:000013">
    <property type="entry name" value="FYVE, RhoGEF and PH domain-containing protein 4"/>
    <property type="match status" value="1"/>
</dbReference>
<dbReference type="FunFam" id="2.30.29.30:FF:000113">
    <property type="entry name" value="FYVE, RhoGEF and PH domain-containing protein 4"/>
    <property type="match status" value="1"/>
</dbReference>
<dbReference type="Gene3D" id="1.20.900.10">
    <property type="entry name" value="Dbl homology (DH) domain"/>
    <property type="match status" value="1"/>
</dbReference>
<dbReference type="Gene3D" id="2.30.29.30">
    <property type="entry name" value="Pleckstrin-homology domain (PH domain)/Phosphotyrosine-binding domain (PTB)"/>
    <property type="match status" value="2"/>
</dbReference>
<dbReference type="Gene3D" id="3.30.40.10">
    <property type="entry name" value="Zinc/RING finger domain, C3HC4 (zinc finger)"/>
    <property type="match status" value="1"/>
</dbReference>
<dbReference type="InterPro" id="IPR035899">
    <property type="entry name" value="DBL_dom_sf"/>
</dbReference>
<dbReference type="InterPro" id="IPR000219">
    <property type="entry name" value="DH_dom"/>
</dbReference>
<dbReference type="InterPro" id="IPR035941">
    <property type="entry name" value="FGD1-4_PH2"/>
</dbReference>
<dbReference type="InterPro" id="IPR037797">
    <property type="entry name" value="FGD2_PH1"/>
</dbReference>
<dbReference type="InterPro" id="IPR051092">
    <property type="entry name" value="FYVE_RhoGEF_PH"/>
</dbReference>
<dbReference type="InterPro" id="IPR011993">
    <property type="entry name" value="PH-like_dom_sf"/>
</dbReference>
<dbReference type="InterPro" id="IPR001849">
    <property type="entry name" value="PH_domain"/>
</dbReference>
<dbReference type="InterPro" id="IPR055251">
    <property type="entry name" value="SOS1_NGEF_PH"/>
</dbReference>
<dbReference type="InterPro" id="IPR000306">
    <property type="entry name" value="Znf_FYVE"/>
</dbReference>
<dbReference type="InterPro" id="IPR017455">
    <property type="entry name" value="Znf_FYVE-rel"/>
</dbReference>
<dbReference type="InterPro" id="IPR011011">
    <property type="entry name" value="Znf_FYVE_PHD"/>
</dbReference>
<dbReference type="InterPro" id="IPR013083">
    <property type="entry name" value="Znf_RING/FYVE/PHD"/>
</dbReference>
<dbReference type="PANTHER" id="PTHR12673">
    <property type="entry name" value="FACIOGENITAL DYSPLASIA PROTEIN"/>
    <property type="match status" value="1"/>
</dbReference>
<dbReference type="PANTHER" id="PTHR12673:SF82">
    <property type="entry name" value="FYVE, RHOGEF AND PH DOMAIN-CONTAINING PROTEIN 2"/>
    <property type="match status" value="1"/>
</dbReference>
<dbReference type="Pfam" id="PF01363">
    <property type="entry name" value="FYVE"/>
    <property type="match status" value="1"/>
</dbReference>
<dbReference type="Pfam" id="PF00169">
    <property type="entry name" value="PH"/>
    <property type="match status" value="1"/>
</dbReference>
<dbReference type="Pfam" id="PF00621">
    <property type="entry name" value="RhoGEF"/>
    <property type="match status" value="1"/>
</dbReference>
<dbReference type="Pfam" id="PF22697">
    <property type="entry name" value="SOS1_NGEF_PH"/>
    <property type="match status" value="1"/>
</dbReference>
<dbReference type="SMART" id="SM00064">
    <property type="entry name" value="FYVE"/>
    <property type="match status" value="1"/>
</dbReference>
<dbReference type="SMART" id="SM00233">
    <property type="entry name" value="PH"/>
    <property type="match status" value="2"/>
</dbReference>
<dbReference type="SMART" id="SM00325">
    <property type="entry name" value="RhoGEF"/>
    <property type="match status" value="1"/>
</dbReference>
<dbReference type="SUPFAM" id="SSF48065">
    <property type="entry name" value="DBL homology domain (DH-domain)"/>
    <property type="match status" value="1"/>
</dbReference>
<dbReference type="SUPFAM" id="SSF57903">
    <property type="entry name" value="FYVE/PHD zinc finger"/>
    <property type="match status" value="1"/>
</dbReference>
<dbReference type="SUPFAM" id="SSF50729">
    <property type="entry name" value="PH domain-like"/>
    <property type="match status" value="2"/>
</dbReference>
<dbReference type="PROSITE" id="PS50010">
    <property type="entry name" value="DH_2"/>
    <property type="match status" value="1"/>
</dbReference>
<dbReference type="PROSITE" id="PS50003">
    <property type="entry name" value="PH_DOMAIN"/>
    <property type="match status" value="2"/>
</dbReference>
<dbReference type="PROSITE" id="PS50178">
    <property type="entry name" value="ZF_FYVE"/>
    <property type="match status" value="1"/>
</dbReference>